<accession>B0RR56</accession>
<sequence length="189" mass="21313">MSIKSDRWIKRMAEQHAMIEPFEPGQIKHDAAGQRIVSFGTSSYGYDVRCSREFKIFTNINSTIVDPKHFDPGSFVDIESDVCIIPPNSFALARTVEYFRIPRDTLVVCLGKSTYARCGIIVNVTPLEPEWEGRVTLEFSNTTPLPARIYANEGVAQMLFFQSDEVCETSYKDRGGKYQGQTGVTLPRT</sequence>
<organism>
    <name type="scientific">Xanthomonas campestris pv. campestris (strain B100)</name>
    <dbReference type="NCBI Taxonomy" id="509169"/>
    <lineage>
        <taxon>Bacteria</taxon>
        <taxon>Pseudomonadati</taxon>
        <taxon>Pseudomonadota</taxon>
        <taxon>Gammaproteobacteria</taxon>
        <taxon>Lysobacterales</taxon>
        <taxon>Lysobacteraceae</taxon>
        <taxon>Xanthomonas</taxon>
    </lineage>
</organism>
<evidence type="ECO:0000255" key="1">
    <source>
        <dbReference type="HAMAP-Rule" id="MF_00146"/>
    </source>
</evidence>
<keyword id="KW-0378">Hydrolase</keyword>
<keyword id="KW-0546">Nucleotide metabolism</keyword>
<keyword id="KW-0547">Nucleotide-binding</keyword>
<proteinExistence type="inferred from homology"/>
<name>DCD_XANCB</name>
<protein>
    <recommendedName>
        <fullName evidence="1">dCTP deaminase</fullName>
        <ecNumber evidence="1">3.5.4.13</ecNumber>
    </recommendedName>
    <alternativeName>
        <fullName evidence="1">Deoxycytidine triphosphate deaminase</fullName>
    </alternativeName>
</protein>
<feature type="chain" id="PRO_1000096460" description="dCTP deaminase">
    <location>
        <begin position="1"/>
        <end position="189"/>
    </location>
</feature>
<feature type="active site" description="Proton donor/acceptor" evidence="1">
    <location>
        <position position="138"/>
    </location>
</feature>
<feature type="binding site" evidence="1">
    <location>
        <begin position="112"/>
        <end position="117"/>
    </location>
    <ligand>
        <name>dCTP</name>
        <dbReference type="ChEBI" id="CHEBI:61481"/>
    </ligand>
</feature>
<feature type="binding site" evidence="1">
    <location>
        <begin position="136"/>
        <end position="138"/>
    </location>
    <ligand>
        <name>dCTP</name>
        <dbReference type="ChEBI" id="CHEBI:61481"/>
    </ligand>
</feature>
<feature type="binding site" evidence="1">
    <location>
        <position position="157"/>
    </location>
    <ligand>
        <name>dCTP</name>
        <dbReference type="ChEBI" id="CHEBI:61481"/>
    </ligand>
</feature>
<feature type="binding site" evidence="1">
    <location>
        <position position="171"/>
    </location>
    <ligand>
        <name>dCTP</name>
        <dbReference type="ChEBI" id="CHEBI:61481"/>
    </ligand>
</feature>
<feature type="binding site" evidence="1">
    <location>
        <position position="181"/>
    </location>
    <ligand>
        <name>dCTP</name>
        <dbReference type="ChEBI" id="CHEBI:61481"/>
    </ligand>
</feature>
<gene>
    <name evidence="1" type="primary">dcd</name>
    <name type="ordered locus">xcc-b100_1591</name>
</gene>
<reference key="1">
    <citation type="journal article" date="2008" name="J. Biotechnol.">
        <title>The genome of Xanthomonas campestris pv. campestris B100 and its use for the reconstruction of metabolic pathways involved in xanthan biosynthesis.</title>
        <authorList>
            <person name="Vorhoelter F.-J."/>
            <person name="Schneiker S."/>
            <person name="Goesmann A."/>
            <person name="Krause L."/>
            <person name="Bekel T."/>
            <person name="Kaiser O."/>
            <person name="Linke B."/>
            <person name="Patschkowski T."/>
            <person name="Rueckert C."/>
            <person name="Schmid J."/>
            <person name="Sidhu V.K."/>
            <person name="Sieber V."/>
            <person name="Tauch A."/>
            <person name="Watt S.A."/>
            <person name="Weisshaar B."/>
            <person name="Becker A."/>
            <person name="Niehaus K."/>
            <person name="Puehler A."/>
        </authorList>
    </citation>
    <scope>NUCLEOTIDE SEQUENCE [LARGE SCALE GENOMIC DNA]</scope>
    <source>
        <strain>B100</strain>
    </source>
</reference>
<comment type="function">
    <text evidence="1">Catalyzes the deamination of dCTP to dUTP.</text>
</comment>
<comment type="catalytic activity">
    <reaction evidence="1">
        <text>dCTP + H2O + H(+) = dUTP + NH4(+)</text>
        <dbReference type="Rhea" id="RHEA:22680"/>
        <dbReference type="ChEBI" id="CHEBI:15377"/>
        <dbReference type="ChEBI" id="CHEBI:15378"/>
        <dbReference type="ChEBI" id="CHEBI:28938"/>
        <dbReference type="ChEBI" id="CHEBI:61481"/>
        <dbReference type="ChEBI" id="CHEBI:61555"/>
        <dbReference type="EC" id="3.5.4.13"/>
    </reaction>
</comment>
<comment type="pathway">
    <text evidence="1">Pyrimidine metabolism; dUMP biosynthesis; dUMP from dCTP (dUTP route): step 1/2.</text>
</comment>
<comment type="subunit">
    <text evidence="1">Homotrimer.</text>
</comment>
<comment type="similarity">
    <text evidence="1">Belongs to the dCTP deaminase family.</text>
</comment>
<dbReference type="EC" id="3.5.4.13" evidence="1"/>
<dbReference type="EMBL" id="AM920689">
    <property type="protein sequence ID" value="CAP50941.1"/>
    <property type="molecule type" value="Genomic_DNA"/>
</dbReference>
<dbReference type="SMR" id="B0RR56"/>
<dbReference type="KEGG" id="xca:xcc-b100_1591"/>
<dbReference type="HOGENOM" id="CLU_087476_4_0_6"/>
<dbReference type="UniPathway" id="UPA00610">
    <property type="reaction ID" value="UER00665"/>
</dbReference>
<dbReference type="Proteomes" id="UP000001188">
    <property type="component" value="Chromosome"/>
</dbReference>
<dbReference type="GO" id="GO:0008829">
    <property type="term" value="F:dCTP deaminase activity"/>
    <property type="evidence" value="ECO:0007669"/>
    <property type="project" value="UniProtKB-UniRule"/>
</dbReference>
<dbReference type="GO" id="GO:0000166">
    <property type="term" value="F:nucleotide binding"/>
    <property type="evidence" value="ECO:0007669"/>
    <property type="project" value="UniProtKB-KW"/>
</dbReference>
<dbReference type="GO" id="GO:0006226">
    <property type="term" value="P:dUMP biosynthetic process"/>
    <property type="evidence" value="ECO:0007669"/>
    <property type="project" value="UniProtKB-UniPathway"/>
</dbReference>
<dbReference type="GO" id="GO:0006229">
    <property type="term" value="P:dUTP biosynthetic process"/>
    <property type="evidence" value="ECO:0007669"/>
    <property type="project" value="UniProtKB-UniRule"/>
</dbReference>
<dbReference type="GO" id="GO:0015949">
    <property type="term" value="P:nucleobase-containing small molecule interconversion"/>
    <property type="evidence" value="ECO:0007669"/>
    <property type="project" value="TreeGrafter"/>
</dbReference>
<dbReference type="CDD" id="cd07557">
    <property type="entry name" value="trimeric_dUTPase"/>
    <property type="match status" value="1"/>
</dbReference>
<dbReference type="FunFam" id="2.70.40.10:FF:000001">
    <property type="entry name" value="dCTP deaminase"/>
    <property type="match status" value="1"/>
</dbReference>
<dbReference type="Gene3D" id="2.70.40.10">
    <property type="match status" value="1"/>
</dbReference>
<dbReference type="HAMAP" id="MF_00146">
    <property type="entry name" value="dCTP_deaminase"/>
    <property type="match status" value="1"/>
</dbReference>
<dbReference type="InterPro" id="IPR011962">
    <property type="entry name" value="dCTP_deaminase"/>
</dbReference>
<dbReference type="InterPro" id="IPR036157">
    <property type="entry name" value="dUTPase-like_sf"/>
</dbReference>
<dbReference type="InterPro" id="IPR033704">
    <property type="entry name" value="dUTPase_trimeric"/>
</dbReference>
<dbReference type="NCBIfam" id="TIGR02274">
    <property type="entry name" value="dCTP_deam"/>
    <property type="match status" value="1"/>
</dbReference>
<dbReference type="PANTHER" id="PTHR42680">
    <property type="entry name" value="DCTP DEAMINASE"/>
    <property type="match status" value="1"/>
</dbReference>
<dbReference type="PANTHER" id="PTHR42680:SF3">
    <property type="entry name" value="DCTP DEAMINASE"/>
    <property type="match status" value="1"/>
</dbReference>
<dbReference type="Pfam" id="PF22769">
    <property type="entry name" value="DCD"/>
    <property type="match status" value="1"/>
</dbReference>
<dbReference type="SUPFAM" id="SSF51283">
    <property type="entry name" value="dUTPase-like"/>
    <property type="match status" value="1"/>
</dbReference>